<organism>
    <name type="scientific">Macaca fascicularis</name>
    <name type="common">Crab-eating macaque</name>
    <name type="synonym">Cynomolgus monkey</name>
    <dbReference type="NCBI Taxonomy" id="9541"/>
    <lineage>
        <taxon>Eukaryota</taxon>
        <taxon>Metazoa</taxon>
        <taxon>Chordata</taxon>
        <taxon>Craniata</taxon>
        <taxon>Vertebrata</taxon>
        <taxon>Euteleostomi</taxon>
        <taxon>Mammalia</taxon>
        <taxon>Eutheria</taxon>
        <taxon>Euarchontoglires</taxon>
        <taxon>Primates</taxon>
        <taxon>Haplorrhini</taxon>
        <taxon>Catarrhini</taxon>
        <taxon>Cercopithecidae</taxon>
        <taxon>Cercopithecinae</taxon>
        <taxon>Macaca</taxon>
    </lineage>
</organism>
<comment type="function">
    <text evidence="1">Potent inhibitor of the complement membrane attack complex (MAC) action, which protects self-cells from damage during complement activation. Acts by binding to the beta-haipins of C8 (C8A and C8B) components of the assembling MAC, forming an intermolecular beta-sheet that prevents incorporation of the multiple copies of C9 required for complete formation of the osmolytic pore.</text>
</comment>
<comment type="subunit">
    <text evidence="1">Interacts with T-cell surface antigen CD2.</text>
</comment>
<comment type="subcellular location">
    <subcellularLocation>
        <location evidence="1">Cell membrane</location>
        <topology evidence="1">Lipid-anchor</topology>
        <topology evidence="1">GPI-anchor</topology>
    </subcellularLocation>
    <subcellularLocation>
        <location evidence="1">Secreted</location>
    </subcellularLocation>
    <text evidence="1">Localizes to the cell surface. Soluble form found in a number of tissues.</text>
</comment>
<comment type="PTM">
    <text evidence="1">N- and O-glycosylated.</text>
</comment>
<sequence>MGIQGGSVLFGLLLVLAVFCHSGHSLQCYNCPNPTTDCKTAINCSSGFDTCLIARAGLQVYNQCWKFANCNYNDISTLLKESELRYFCCKKDLCNFNEQLESGGTSLSEKTVVLLVTPLLAAAWCLHP</sequence>
<keyword id="KW-1003">Cell membrane</keyword>
<keyword id="KW-1015">Disulfide bond</keyword>
<keyword id="KW-0325">Glycoprotein</keyword>
<keyword id="KW-0336">GPI-anchor</keyword>
<keyword id="KW-0449">Lipoprotein</keyword>
<keyword id="KW-0472">Membrane</keyword>
<keyword id="KW-1185">Reference proteome</keyword>
<keyword id="KW-0964">Secreted</keyword>
<keyword id="KW-0732">Signal</keyword>
<accession>Q8SQ46</accession>
<accession>Q4R5M6</accession>
<accession>Q8SPI3</accession>
<gene>
    <name type="primary">CD59</name>
    <name type="ORF">QccE-13278</name>
    <name type="ORF">QmoA-10351</name>
    <name type="ORF">QnpA-17056</name>
</gene>
<proteinExistence type="evidence at transcript level"/>
<dbReference type="EMBL" id="AB072017">
    <property type="protein sequence ID" value="BAB86806.1"/>
    <property type="molecule type" value="mRNA"/>
</dbReference>
<dbReference type="EMBL" id="AB072018">
    <property type="protein sequence ID" value="BAB86807.1"/>
    <property type="molecule type" value="mRNA"/>
</dbReference>
<dbReference type="EMBL" id="AB169517">
    <property type="protein sequence ID" value="BAE01599.1"/>
    <property type="molecule type" value="mRNA"/>
</dbReference>
<dbReference type="RefSeq" id="XP_015289596.1">
    <property type="nucleotide sequence ID" value="XM_015434110.1"/>
</dbReference>
<dbReference type="SMR" id="Q8SQ46"/>
<dbReference type="STRING" id="9541.ENSMFAP00000019755"/>
<dbReference type="GlyCosmos" id="Q8SQ46">
    <property type="glycosylation" value="1 site, No reported glycans"/>
</dbReference>
<dbReference type="eggNOG" id="ENOG502SA4P">
    <property type="taxonomic scope" value="Eukaryota"/>
</dbReference>
<dbReference type="Proteomes" id="UP000233100">
    <property type="component" value="Unplaced"/>
</dbReference>
<dbReference type="GO" id="GO:0005886">
    <property type="term" value="C:plasma membrane"/>
    <property type="evidence" value="ECO:0007669"/>
    <property type="project" value="UniProtKB-SubCell"/>
</dbReference>
<dbReference type="GO" id="GO:0098552">
    <property type="term" value="C:side of membrane"/>
    <property type="evidence" value="ECO:0007669"/>
    <property type="project" value="UniProtKB-KW"/>
</dbReference>
<dbReference type="GO" id="GO:0001848">
    <property type="term" value="F:complement binding"/>
    <property type="evidence" value="ECO:0007669"/>
    <property type="project" value="TreeGrafter"/>
</dbReference>
<dbReference type="GO" id="GO:0001971">
    <property type="term" value="P:negative regulation of activation of membrane attack complex"/>
    <property type="evidence" value="ECO:0007669"/>
    <property type="project" value="TreeGrafter"/>
</dbReference>
<dbReference type="CDD" id="cd23554">
    <property type="entry name" value="TFP_LU_ECD_CD59"/>
    <property type="match status" value="1"/>
</dbReference>
<dbReference type="FunFam" id="2.10.60.10:FF:000023">
    <property type="entry name" value="CD59 glycoprotein preproprotein"/>
    <property type="match status" value="1"/>
</dbReference>
<dbReference type="Gene3D" id="2.10.60.10">
    <property type="entry name" value="CD59"/>
    <property type="match status" value="1"/>
</dbReference>
<dbReference type="InterPro" id="IPR056949">
    <property type="entry name" value="CD59"/>
</dbReference>
<dbReference type="InterPro" id="IPR018363">
    <property type="entry name" value="CD59_antigen_CS"/>
</dbReference>
<dbReference type="InterPro" id="IPR016054">
    <property type="entry name" value="LY6_UPA_recep-like"/>
</dbReference>
<dbReference type="InterPro" id="IPR045860">
    <property type="entry name" value="Snake_toxin-like_sf"/>
</dbReference>
<dbReference type="PANTHER" id="PTHR10036">
    <property type="entry name" value="CD59 GLYCOPROTEIN"/>
    <property type="match status" value="1"/>
</dbReference>
<dbReference type="PANTHER" id="PTHR10036:SF24">
    <property type="entry name" value="CD59 GLYCOPROTEIN"/>
    <property type="match status" value="1"/>
</dbReference>
<dbReference type="Pfam" id="PF25152">
    <property type="entry name" value="CD59"/>
    <property type="match status" value="1"/>
</dbReference>
<dbReference type="SMART" id="SM00134">
    <property type="entry name" value="LU"/>
    <property type="match status" value="1"/>
</dbReference>
<dbReference type="SUPFAM" id="SSF57302">
    <property type="entry name" value="Snake toxin-like"/>
    <property type="match status" value="1"/>
</dbReference>
<dbReference type="PROSITE" id="PS00983">
    <property type="entry name" value="LY6_UPAR"/>
    <property type="match status" value="1"/>
</dbReference>
<evidence type="ECO:0000250" key="1">
    <source>
        <dbReference type="UniProtKB" id="P13987"/>
    </source>
</evidence>
<evidence type="ECO:0000255" key="2"/>
<evidence type="ECO:0000269" key="3">
    <source>
    </source>
</evidence>
<reference key="1">
    <citation type="journal article" date="2002" name="Genomics">
        <title>Search for genes positively selected during primate evolution by 5'-end-sequence screening of cynomolgus monkey cDNAs.</title>
        <authorList>
            <person name="Osada N."/>
            <person name="Kusuda J."/>
            <person name="Hirata M."/>
            <person name="Tanuma R."/>
            <person name="Hida M."/>
            <person name="Sugano S."/>
            <person name="Hirai M."/>
            <person name="Hashimoto K."/>
        </authorList>
    </citation>
    <scope>NUCLEOTIDE SEQUENCE [LARGE SCALE MRNA]</scope>
    <scope>VARIANTS PHE-72 AND LEU-96</scope>
    <source>
        <tissue>Medulla oblongata</tissue>
        <tissue>Parietal cortex</tissue>
    </source>
</reference>
<reference key="2">
    <citation type="submission" date="2005-06" db="EMBL/GenBank/DDBJ databases">
        <title>DNA sequences of macaque genes expressed in brain or testis and its evolutionary implications.</title>
        <authorList>
            <consortium name="International consortium for macaque cDNA sequencing and analysis"/>
        </authorList>
    </citation>
    <scope>NUCLEOTIDE SEQUENCE [LARGE SCALE MRNA]</scope>
    <source>
        <tissue>Brain cortex</tissue>
    </source>
</reference>
<feature type="signal peptide" evidence="1">
    <location>
        <begin position="1"/>
        <end position="25"/>
    </location>
</feature>
<feature type="chain" id="PRO_0000036110" description="CD59 glycoprotein">
    <location>
        <begin position="26"/>
        <end position="102"/>
    </location>
</feature>
<feature type="propeptide" id="PRO_0000036111" description="Removed in mature form" evidence="1">
    <location>
        <begin position="103"/>
        <end position="128"/>
    </location>
</feature>
<feature type="domain" description="UPAR/Ly6">
    <location>
        <begin position="26"/>
        <end position="108"/>
    </location>
</feature>
<feature type="lipid moiety-binding region" description="GPI-anchor amidated serine" evidence="1">
    <location>
        <position position="102"/>
    </location>
</feature>
<feature type="glycosylation site" description="N-linked (GlcNAc...) asparagine" evidence="2">
    <location>
        <position position="43"/>
    </location>
</feature>
<feature type="disulfide bond" evidence="1">
    <location>
        <begin position="28"/>
        <end position="51"/>
    </location>
</feature>
<feature type="disulfide bond" evidence="1">
    <location>
        <begin position="31"/>
        <end position="38"/>
    </location>
</feature>
<feature type="disulfide bond" evidence="1">
    <location>
        <begin position="44"/>
        <end position="64"/>
    </location>
</feature>
<feature type="disulfide bond" evidence="1">
    <location>
        <begin position="70"/>
        <end position="88"/>
    </location>
</feature>
<feature type="disulfide bond" evidence="1">
    <location>
        <begin position="89"/>
        <end position="94"/>
    </location>
</feature>
<feature type="sequence variant" evidence="3">
    <original>Y</original>
    <variation>F</variation>
    <location>
        <position position="72"/>
    </location>
</feature>
<feature type="sequence variant" evidence="3">
    <original>F</original>
    <variation>L</variation>
    <location>
        <position position="96"/>
    </location>
</feature>
<protein>
    <recommendedName>
        <fullName>CD59 glycoprotein</fullName>
    </recommendedName>
    <alternativeName>
        <fullName>MAC-inhibitory protein</fullName>
        <shortName>MAC-IP</shortName>
    </alternativeName>
    <alternativeName>
        <fullName>Membrane attack complex inhibition factor</fullName>
        <shortName>MACIF</shortName>
    </alternativeName>
    <alternativeName>
        <fullName>Protectin</fullName>
    </alternativeName>
    <cdAntigenName>CD59</cdAntigenName>
</protein>
<name>CD59_MACFA</name>